<name>DBH_CHLTR</name>
<proteinExistence type="inferred from homology"/>
<keyword id="KW-0226">DNA condensation</keyword>
<keyword id="KW-0238">DNA-binding</keyword>
<keyword id="KW-1185">Reference proteome</keyword>
<protein>
    <recommendedName>
        <fullName>Probable DNA-binding protein HU</fullName>
    </recommendedName>
</protein>
<accession>P64386</accession>
<accession>O84269</accession>
<feature type="chain" id="PRO_0000104931" description="Probable DNA-binding protein HU">
    <location>
        <begin position="1"/>
        <end position="100"/>
    </location>
</feature>
<organism>
    <name type="scientific">Chlamydia trachomatis serovar D (strain ATCC VR-885 / DSM 19411 / UW-3/Cx)</name>
    <dbReference type="NCBI Taxonomy" id="272561"/>
    <lineage>
        <taxon>Bacteria</taxon>
        <taxon>Pseudomonadati</taxon>
        <taxon>Chlamydiota</taxon>
        <taxon>Chlamydiia</taxon>
        <taxon>Chlamydiales</taxon>
        <taxon>Chlamydiaceae</taxon>
        <taxon>Chlamydia/Chlamydophila group</taxon>
        <taxon>Chlamydia</taxon>
    </lineage>
</organism>
<gene>
    <name type="primary">hup</name>
    <name type="ordered locus">CT_267</name>
</gene>
<sequence>MATMTKKKLISTISQDHKIHPNHVRTVIQNFLDKMTDALVQGDRLEFRDFGVLQVVERKPKVGRNPKNAAVPIHIPARRAVKFTPGKRMKRLIETPTKSS</sequence>
<dbReference type="EMBL" id="AE001273">
    <property type="protein sequence ID" value="AAC67860.1"/>
    <property type="molecule type" value="Genomic_DNA"/>
</dbReference>
<dbReference type="PIR" id="H71536">
    <property type="entry name" value="H71536"/>
</dbReference>
<dbReference type="RefSeq" id="WP_009871614.1">
    <property type="nucleotide sequence ID" value="NC_000117.1"/>
</dbReference>
<dbReference type="SMR" id="P64386"/>
<dbReference type="FunCoup" id="P64386">
    <property type="interactions" value="232"/>
</dbReference>
<dbReference type="STRING" id="272561.CT_267"/>
<dbReference type="EnsemblBacteria" id="AAC67860">
    <property type="protein sequence ID" value="AAC67860"/>
    <property type="gene ID" value="CT_267"/>
</dbReference>
<dbReference type="KEGG" id="ctr:CT_267"/>
<dbReference type="PATRIC" id="fig|272561.5.peg.285"/>
<dbReference type="HOGENOM" id="CLU_105066_2_3_0"/>
<dbReference type="InParanoid" id="P64386"/>
<dbReference type="OrthoDB" id="9799835at2"/>
<dbReference type="PRO" id="PR:P64386"/>
<dbReference type="Proteomes" id="UP000000431">
    <property type="component" value="Chromosome"/>
</dbReference>
<dbReference type="GO" id="GO:0005829">
    <property type="term" value="C:cytosol"/>
    <property type="evidence" value="ECO:0000318"/>
    <property type="project" value="GO_Central"/>
</dbReference>
<dbReference type="GO" id="GO:0003677">
    <property type="term" value="F:DNA binding"/>
    <property type="evidence" value="ECO:0000318"/>
    <property type="project" value="GO_Central"/>
</dbReference>
<dbReference type="GO" id="GO:0030527">
    <property type="term" value="F:structural constituent of chromatin"/>
    <property type="evidence" value="ECO:0007669"/>
    <property type="project" value="InterPro"/>
</dbReference>
<dbReference type="GO" id="GO:0030261">
    <property type="term" value="P:chromosome condensation"/>
    <property type="evidence" value="ECO:0007669"/>
    <property type="project" value="UniProtKB-KW"/>
</dbReference>
<dbReference type="CDD" id="cd13836">
    <property type="entry name" value="IHF_B"/>
    <property type="match status" value="1"/>
</dbReference>
<dbReference type="FunFam" id="4.10.520.10:FF:000017">
    <property type="entry name" value="Integration host factor alpha-subunit"/>
    <property type="match status" value="1"/>
</dbReference>
<dbReference type="Gene3D" id="4.10.520.10">
    <property type="entry name" value="IHF-like DNA-binding proteins"/>
    <property type="match status" value="1"/>
</dbReference>
<dbReference type="InterPro" id="IPR000119">
    <property type="entry name" value="Hist_DNA-bd"/>
</dbReference>
<dbReference type="InterPro" id="IPR010992">
    <property type="entry name" value="IHF-like_DNA-bd_dom_sf"/>
</dbReference>
<dbReference type="PANTHER" id="PTHR33175">
    <property type="entry name" value="DNA-BINDING PROTEIN HU"/>
    <property type="match status" value="1"/>
</dbReference>
<dbReference type="PANTHER" id="PTHR33175:SF2">
    <property type="entry name" value="INTEGRATION HOST FACTOR SUBUNIT ALPHA"/>
    <property type="match status" value="1"/>
</dbReference>
<dbReference type="Pfam" id="PF00216">
    <property type="entry name" value="Bac_DNA_binding"/>
    <property type="match status" value="1"/>
</dbReference>
<dbReference type="SMART" id="SM00411">
    <property type="entry name" value="BHL"/>
    <property type="match status" value="1"/>
</dbReference>
<dbReference type="SUPFAM" id="SSF47729">
    <property type="entry name" value="IHF-like DNA-binding proteins"/>
    <property type="match status" value="1"/>
</dbReference>
<reference key="1">
    <citation type="journal article" date="1998" name="Science">
        <title>Genome sequence of an obligate intracellular pathogen of humans: Chlamydia trachomatis.</title>
        <authorList>
            <person name="Stephens R.S."/>
            <person name="Kalman S."/>
            <person name="Lammel C.J."/>
            <person name="Fan J."/>
            <person name="Marathe R."/>
            <person name="Aravind L."/>
            <person name="Mitchell W.P."/>
            <person name="Olinger L."/>
            <person name="Tatusov R.L."/>
            <person name="Zhao Q."/>
            <person name="Koonin E.V."/>
            <person name="Davis R.W."/>
        </authorList>
    </citation>
    <scope>NUCLEOTIDE SEQUENCE [LARGE SCALE GENOMIC DNA]</scope>
    <source>
        <strain>ATCC VR-885 / DSM 19411 / UW-3/Cx</strain>
    </source>
</reference>
<comment type="function">
    <text evidence="1">Histone-like DNA-binding protein which is capable of wrapping DNA to stabilize it, and thus to prevent its denaturation under extreme environmental conditions.</text>
</comment>
<comment type="similarity">
    <text evidence="2">Belongs to the bacterial histone-like protein family.</text>
</comment>
<evidence type="ECO:0000250" key="1"/>
<evidence type="ECO:0000305" key="2"/>